<evidence type="ECO:0000250" key="1">
    <source>
        <dbReference type="UniProtKB" id="P08617"/>
    </source>
</evidence>
<evidence type="ECO:0000256" key="2">
    <source>
        <dbReference type="SAM" id="MobiDB-lite"/>
    </source>
</evidence>
<evidence type="ECO:0000305" key="3"/>
<feature type="chain" id="PRO_0000445069" description="Capsid protein VP1-2A">
    <location>
        <begin position="1" status="less than"/>
        <end position="56" status="greater than"/>
    </location>
</feature>
<feature type="chain" id="PRO_0000455812" description="Genome polyprotein">
    <location>
        <begin position="1" status="less than"/>
        <end position="56" status="greater than"/>
    </location>
</feature>
<feature type="chain" id="PRO_0000314779" description="Capsid protein VP1">
    <location>
        <begin position="1" status="less than"/>
        <end position="2"/>
    </location>
</feature>
<feature type="chain" id="PRO_0000310691" description="Assembly signal 2A">
    <location>
        <begin position="3"/>
        <end position="56" status="greater than"/>
    </location>
</feature>
<feature type="region of interest" description="Disordered" evidence="2">
    <location>
        <begin position="1"/>
        <end position="30"/>
    </location>
</feature>
<feature type="compositionally biased region" description="Basic and acidic residues" evidence="2">
    <location>
        <begin position="17"/>
        <end position="30"/>
    </location>
</feature>
<feature type="site" description="Cleavage; partial; by host" evidence="1">
    <location>
        <begin position="2"/>
        <end position="3"/>
    </location>
</feature>
<feature type="site" description="Important for VP1 folding and capsid assembly" evidence="1">
    <location>
        <position position="6"/>
    </location>
</feature>
<feature type="non-terminal residue">
    <location>
        <position position="1"/>
    </location>
</feature>
<feature type="non-terminal residue">
    <location>
        <position position="56"/>
    </location>
</feature>
<accession>P0C5S8</accession>
<sequence>ETMLDRIASGDLESSVDDPRSAEDKRFESHIEQGKPYKELRMEVGKQTLKYAQEEL</sequence>
<organismHost>
    <name type="scientific">Callithrix</name>
    <dbReference type="NCBI Taxonomy" id="9481"/>
</organismHost>
<organismHost>
    <name type="scientific">Cercopithecus hamlyni</name>
    <name type="common">Owl-faced monkey</name>
    <name type="synonym">Hamlyn's monkey</name>
    <dbReference type="NCBI Taxonomy" id="9536"/>
</organismHost>
<organismHost>
    <name type="scientific">Chlorocebus aethiops</name>
    <name type="common">Green monkey</name>
    <name type="synonym">Cercopithecus aethiops</name>
    <dbReference type="NCBI Taxonomy" id="9534"/>
</organismHost>
<organismHost>
    <name type="scientific">Macaca</name>
    <name type="common">macaques</name>
    <dbReference type="NCBI Taxonomy" id="9539"/>
</organismHost>
<organismHost>
    <name type="scientific">Pan troglodytes</name>
    <name type="common">Chimpanzee</name>
    <dbReference type="NCBI Taxonomy" id="9598"/>
</organismHost>
<dbReference type="EMBL" id="L07731">
    <property type="status" value="NOT_ANNOTATED_CDS"/>
    <property type="molecule type" value="Genomic_RNA"/>
</dbReference>
<dbReference type="SMR" id="P0C5S8"/>
<dbReference type="GO" id="GO:0033644">
    <property type="term" value="C:host cell membrane"/>
    <property type="evidence" value="ECO:0007669"/>
    <property type="project" value="UniProtKB-KW"/>
</dbReference>
<dbReference type="GO" id="GO:0072494">
    <property type="term" value="C:host multivesicular body"/>
    <property type="evidence" value="ECO:0007669"/>
    <property type="project" value="UniProtKB-SubCell"/>
</dbReference>
<dbReference type="GO" id="GO:0039618">
    <property type="term" value="C:T=pseudo3 icosahedral viral capsid"/>
    <property type="evidence" value="ECO:0007669"/>
    <property type="project" value="UniProtKB-KW"/>
</dbReference>
<dbReference type="GO" id="GO:0015267">
    <property type="term" value="F:channel activity"/>
    <property type="evidence" value="ECO:0007669"/>
    <property type="project" value="UniProtKB-KW"/>
</dbReference>
<dbReference type="GO" id="GO:0034220">
    <property type="term" value="P:monoatomic ion transmembrane transport"/>
    <property type="evidence" value="ECO:0007669"/>
    <property type="project" value="UniProtKB-KW"/>
</dbReference>
<dbReference type="GO" id="GO:0046718">
    <property type="term" value="P:symbiont entry into host cell"/>
    <property type="evidence" value="ECO:0007669"/>
    <property type="project" value="UniProtKB-KW"/>
</dbReference>
<dbReference type="GO" id="GO:0019062">
    <property type="term" value="P:virion attachment to host cell"/>
    <property type="evidence" value="ECO:0007669"/>
    <property type="project" value="UniProtKB-KW"/>
</dbReference>
<organism>
    <name type="scientific">Simian hepatitis A virus genotype VI (isolate JM55)</name>
    <name type="common">SHAV</name>
    <name type="synonym">Simian hepatitis A virus (isolate Macaca/Indonesia/JM55/1985)</name>
    <dbReference type="NCBI Taxonomy" id="470594"/>
    <lineage>
        <taxon>Viruses</taxon>
        <taxon>Riboviria</taxon>
        <taxon>Orthornavirae</taxon>
        <taxon>Pisuviricota</taxon>
        <taxon>Pisoniviricetes</taxon>
        <taxon>Picornavirales</taxon>
        <taxon>Picornaviridae</taxon>
        <taxon>Heptrevirinae</taxon>
        <taxon>Hepatovirus</taxon>
        <taxon>Hepatovirus ahepa</taxon>
        <taxon>Hepatovirus A</taxon>
    </lineage>
</organism>
<protein>
    <recommendedName>
        <fullName>Genome polyprotein</fullName>
    </recommendedName>
    <component>
        <recommendedName>
            <fullName>Capsid protein VP1-2A</fullName>
        </recommendedName>
        <alternativeName>
            <fullName>VPX</fullName>
        </alternativeName>
    </component>
    <component>
        <recommendedName>
            <fullName>Capsid protein VP1</fullName>
        </recommendedName>
        <alternativeName>
            <fullName>P1D</fullName>
        </alternativeName>
        <alternativeName>
            <fullName>Virion protein 1</fullName>
        </alternativeName>
    </component>
    <component>
        <recommendedName>
            <fullName>Assembly signal 2A</fullName>
        </recommendedName>
        <alternativeName>
            <fullName evidence="1">pX</fullName>
        </alternativeName>
    </component>
</protein>
<name>POLG_HAVSJ</name>
<keyword id="KW-0167">Capsid protein</keyword>
<keyword id="KW-1039">Host endosome</keyword>
<keyword id="KW-0945">Host-virus interaction</keyword>
<keyword id="KW-0407">Ion channel</keyword>
<keyword id="KW-0406">Ion transport</keyword>
<keyword id="KW-1143">T=pseudo3 icosahedral capsid protein</keyword>
<keyword id="KW-0813">Transport</keyword>
<keyword id="KW-1161">Viral attachment to host cell</keyword>
<keyword id="KW-1182">Viral ion channel</keyword>
<keyword id="KW-0946">Virion</keyword>
<keyword id="KW-1160">Virus entry into host cell</keyword>
<comment type="function">
    <molecule>Capsid protein VP1</molecule>
    <text evidence="1">Capsid proteins VP1, VP2, and VP3 form a closed capsid enclosing the viral positive strand RNA genome. All these proteins contain a beta-sheet structure called beta-barrel jelly roll. Together they form an icosahedral capsid (T=3) composed of 60 copies of each VP1, VP2, and VP3, with a diameter of approximately 300 Angstroms. VP1 is situated at the 12 fivefold axes, whereas VP2 and VP3 are located at the quasi-sixfold axes. The naked capsid interacts with the host receptor HAVCR1 to provide virion attachment to and probably entry into the target cell.</text>
</comment>
<comment type="function">
    <molecule>Capsid protein VP1-2A</molecule>
    <text evidence="1">Precursor component of immature procapsids that corresponds to an extended form of the structural protein VP1. After maturation, possibly by the host Cathepsin L, the assembly signal 2A is cleaved to give rise to the mature VP1 protein.</text>
</comment>
<comment type="subunit">
    <molecule>Capsid protein VP1-2A</molecule>
    <text evidence="1">Homopentamer. Homooligomer.</text>
</comment>
<comment type="subunit">
    <molecule>Capsid protein VP1</molecule>
    <text evidence="1">Interacts with capsid protein VP2. Interacts with capsid protein VP3.</text>
</comment>
<comment type="subcellular location">
    <molecule>Capsid protein VP1</molecule>
    <subcellularLocation>
        <location evidence="1">Virion</location>
    </subcellularLocation>
    <subcellularLocation>
        <location evidence="1">Host endosome</location>
        <location evidence="1">Host multivesicular body</location>
    </subcellularLocation>
    <text evidence="1">The egress of newly formed virions occurs through an exosome-like mechanism involving endosomal budding of viral capsids into multivesicular bodies.</text>
</comment>
<comment type="domain">
    <molecule>Capsid protein VP1-2A</molecule>
    <text evidence="1">The assembly signal 2A region mediates pentamerization of P1-2A.</text>
</comment>
<comment type="domain">
    <molecule>Genome polyprotein</molecule>
    <text evidence="1">Late-budding domains (L domains) are short sequence motifs essential for viral particle budding. They recruit proteins of the host ESCRT machinery (Endosomal Sorting Complex Required for Transport) or ESCRT-associated proteins. The genome polyprotein contains two L domains: a tandem of (L)YPX(n)L domain which is known to bind the PDCD6IP/ALIX adaptater protein.</text>
</comment>
<comment type="PTM">
    <molecule>Genome polyprotein</molecule>
    <text evidence="1">Specific enzymatic cleavages by viral protease in vivo yield a variety of precursors and mature proteins. Polyprotein processing intermediates are produced, such as P1-2A which is a functional precursor of the structural proteins, VP0 which is a VP4-VP2 precursor, VP1-2A precursor, 3ABC precursor which is a stable and catalytically active precursor of 3A, 3B and 3C proteins, 3AB and 3CD precursors. The assembly signal 2A is removed from VP1-2A by a host protease, possibly host Cathepsin L. This cleavage occurs over a region of 3 amino-acids probably generating VP1 proteins with heterogeneous C-termini.</text>
</comment>
<comment type="PTM">
    <molecule>Capsid protein VP1-2A</molecule>
    <text evidence="1">The assembly signal 2A is removed from VP1-2A by a host protease, possibly host Cathepsin L in naked virions. This cleavage does not occur in enveloped virions. This cleavage occurs over a region of 3 amino-acids probably generating VP1 proteins with heterogeneous C-termini.</text>
</comment>
<comment type="miscellaneous">
    <molecule>Genome polyprotein</molecule>
    <text evidence="1">The need for an intact eIF4G factor for the initiation of translation of HAV results in an inability to shut off host protein synthesis by a mechanism similar to that of other picornaviruses.</text>
</comment>
<comment type="miscellaneous">
    <molecule>Genome polyprotein</molecule>
    <text evidence="1">During infection, enveloped virions (eHAV) are released from cells. These eHAV are cloaked in host-derived membranes and resemble exosomes. The membrane of eHAV is devoid of viral proteins and thus prevents their neutralization by antibodies. eHAV budding is dependent on ESCRT-associated proteins VPS4B and PDCD6IP/ALIX. eHAV are produced and released in the serum and plasma, but not in bile and feces which only contain the naked, nonenveloped virions. It is likely that eHAV also use HAVCR1 as a functional receptor to infect cells, an evolutionary trait that may enhance HAV infectivity.</text>
</comment>
<comment type="similarity">
    <text evidence="3">Belongs to the picornaviridae polyprotein family.</text>
</comment>
<proteinExistence type="inferred from homology"/>
<reference key="1">
    <citation type="journal article" date="1992" name="J. Gen. Virol.">
        <title>Genetic relatedness of hepatitis A virus strains recovered from different geographical regions.</title>
        <authorList>
            <person name="Robertson B.H."/>
            <person name="Jansen R.W."/>
            <person name="Khanna B."/>
            <person name="Totsuka A."/>
            <person name="Nainan O.V."/>
            <person name="Siegl G."/>
            <person name="Widell A."/>
            <person name="Margolis H.S."/>
            <person name="Isomura S."/>
            <person name="Ito K."/>
            <person name="Ishizu T."/>
            <person name="Moritsugu Y."/>
            <person name="Lemon S.M."/>
        </authorList>
    </citation>
    <scope>NUCLEOTIDE SEQUENCE [GENOMIC RNA]</scope>
</reference>